<accession>B2GKR5</accession>
<proteinExistence type="inferred from homology"/>
<name>IF2_KOCRD</name>
<dbReference type="EMBL" id="AP009152">
    <property type="protein sequence ID" value="BAG29951.1"/>
    <property type="molecule type" value="Genomic_DNA"/>
</dbReference>
<dbReference type="RefSeq" id="WP_012398672.1">
    <property type="nucleotide sequence ID" value="NC_010617.1"/>
</dbReference>
<dbReference type="SMR" id="B2GKR5"/>
<dbReference type="STRING" id="378753.KRH_16040"/>
<dbReference type="KEGG" id="krh:KRH_16040"/>
<dbReference type="eggNOG" id="COG0532">
    <property type="taxonomic scope" value="Bacteria"/>
</dbReference>
<dbReference type="HOGENOM" id="CLU_006301_9_1_11"/>
<dbReference type="OrthoDB" id="9811804at2"/>
<dbReference type="Proteomes" id="UP000008838">
    <property type="component" value="Chromosome"/>
</dbReference>
<dbReference type="GO" id="GO:0005829">
    <property type="term" value="C:cytosol"/>
    <property type="evidence" value="ECO:0007669"/>
    <property type="project" value="TreeGrafter"/>
</dbReference>
<dbReference type="GO" id="GO:0005525">
    <property type="term" value="F:GTP binding"/>
    <property type="evidence" value="ECO:0007669"/>
    <property type="project" value="UniProtKB-KW"/>
</dbReference>
<dbReference type="GO" id="GO:0003924">
    <property type="term" value="F:GTPase activity"/>
    <property type="evidence" value="ECO:0007669"/>
    <property type="project" value="UniProtKB-UniRule"/>
</dbReference>
<dbReference type="GO" id="GO:0003743">
    <property type="term" value="F:translation initiation factor activity"/>
    <property type="evidence" value="ECO:0007669"/>
    <property type="project" value="UniProtKB-UniRule"/>
</dbReference>
<dbReference type="CDD" id="cd01887">
    <property type="entry name" value="IF2_eIF5B"/>
    <property type="match status" value="1"/>
</dbReference>
<dbReference type="CDD" id="cd03702">
    <property type="entry name" value="IF2_mtIF2_II"/>
    <property type="match status" value="1"/>
</dbReference>
<dbReference type="CDD" id="cd03692">
    <property type="entry name" value="mtIF2_IVc"/>
    <property type="match status" value="1"/>
</dbReference>
<dbReference type="FunFam" id="2.40.30.10:FF:000007">
    <property type="entry name" value="Translation initiation factor IF-2"/>
    <property type="match status" value="1"/>
</dbReference>
<dbReference type="FunFam" id="2.40.30.10:FF:000008">
    <property type="entry name" value="Translation initiation factor IF-2"/>
    <property type="match status" value="1"/>
</dbReference>
<dbReference type="FunFam" id="3.40.50.10050:FF:000001">
    <property type="entry name" value="Translation initiation factor IF-2"/>
    <property type="match status" value="1"/>
</dbReference>
<dbReference type="FunFam" id="3.40.50.300:FF:000019">
    <property type="entry name" value="Translation initiation factor IF-2"/>
    <property type="match status" value="1"/>
</dbReference>
<dbReference type="Gene3D" id="1.10.10.2480">
    <property type="match status" value="1"/>
</dbReference>
<dbReference type="Gene3D" id="3.40.50.300">
    <property type="entry name" value="P-loop containing nucleotide triphosphate hydrolases"/>
    <property type="match status" value="1"/>
</dbReference>
<dbReference type="Gene3D" id="2.40.30.10">
    <property type="entry name" value="Translation factors"/>
    <property type="match status" value="2"/>
</dbReference>
<dbReference type="Gene3D" id="3.40.50.10050">
    <property type="entry name" value="Translation initiation factor IF- 2, domain 3"/>
    <property type="match status" value="1"/>
</dbReference>
<dbReference type="HAMAP" id="MF_00100_B">
    <property type="entry name" value="IF_2_B"/>
    <property type="match status" value="1"/>
</dbReference>
<dbReference type="InterPro" id="IPR053905">
    <property type="entry name" value="EF-G-like_DII"/>
</dbReference>
<dbReference type="InterPro" id="IPR044145">
    <property type="entry name" value="IF2_II"/>
</dbReference>
<dbReference type="InterPro" id="IPR006847">
    <property type="entry name" value="IF2_N"/>
</dbReference>
<dbReference type="InterPro" id="IPR027417">
    <property type="entry name" value="P-loop_NTPase"/>
</dbReference>
<dbReference type="InterPro" id="IPR005225">
    <property type="entry name" value="Small_GTP-bd"/>
</dbReference>
<dbReference type="InterPro" id="IPR000795">
    <property type="entry name" value="T_Tr_GTP-bd_dom"/>
</dbReference>
<dbReference type="InterPro" id="IPR000178">
    <property type="entry name" value="TF_IF2_bacterial-like"/>
</dbReference>
<dbReference type="InterPro" id="IPR015760">
    <property type="entry name" value="TIF_IF2"/>
</dbReference>
<dbReference type="InterPro" id="IPR023115">
    <property type="entry name" value="TIF_IF2_dom3"/>
</dbReference>
<dbReference type="InterPro" id="IPR036925">
    <property type="entry name" value="TIF_IF2_dom3_sf"/>
</dbReference>
<dbReference type="InterPro" id="IPR009000">
    <property type="entry name" value="Transl_B-barrel_sf"/>
</dbReference>
<dbReference type="NCBIfam" id="TIGR00487">
    <property type="entry name" value="IF-2"/>
    <property type="match status" value="1"/>
</dbReference>
<dbReference type="NCBIfam" id="TIGR00231">
    <property type="entry name" value="small_GTP"/>
    <property type="match status" value="1"/>
</dbReference>
<dbReference type="PANTHER" id="PTHR43381:SF5">
    <property type="entry name" value="TR-TYPE G DOMAIN-CONTAINING PROTEIN"/>
    <property type="match status" value="1"/>
</dbReference>
<dbReference type="PANTHER" id="PTHR43381">
    <property type="entry name" value="TRANSLATION INITIATION FACTOR IF-2-RELATED"/>
    <property type="match status" value="1"/>
</dbReference>
<dbReference type="Pfam" id="PF22042">
    <property type="entry name" value="EF-G_D2"/>
    <property type="match status" value="1"/>
</dbReference>
<dbReference type="Pfam" id="PF00009">
    <property type="entry name" value="GTP_EFTU"/>
    <property type="match status" value="1"/>
</dbReference>
<dbReference type="Pfam" id="PF11987">
    <property type="entry name" value="IF-2"/>
    <property type="match status" value="1"/>
</dbReference>
<dbReference type="Pfam" id="PF04760">
    <property type="entry name" value="IF2_N"/>
    <property type="match status" value="2"/>
</dbReference>
<dbReference type="PRINTS" id="PR00315">
    <property type="entry name" value="ELONGATNFCT"/>
</dbReference>
<dbReference type="SUPFAM" id="SSF52156">
    <property type="entry name" value="Initiation factor IF2/eIF5b, domain 3"/>
    <property type="match status" value="1"/>
</dbReference>
<dbReference type="SUPFAM" id="SSF52540">
    <property type="entry name" value="P-loop containing nucleoside triphosphate hydrolases"/>
    <property type="match status" value="1"/>
</dbReference>
<dbReference type="SUPFAM" id="SSF50447">
    <property type="entry name" value="Translation proteins"/>
    <property type="match status" value="2"/>
</dbReference>
<dbReference type="PROSITE" id="PS51722">
    <property type="entry name" value="G_TR_2"/>
    <property type="match status" value="1"/>
</dbReference>
<dbReference type="PROSITE" id="PS01176">
    <property type="entry name" value="IF2"/>
    <property type="match status" value="1"/>
</dbReference>
<keyword id="KW-0963">Cytoplasm</keyword>
<keyword id="KW-0342">GTP-binding</keyword>
<keyword id="KW-0396">Initiation factor</keyword>
<keyword id="KW-0547">Nucleotide-binding</keyword>
<keyword id="KW-0648">Protein biosynthesis</keyword>
<keyword id="KW-1185">Reference proteome</keyword>
<protein>
    <recommendedName>
        <fullName evidence="2">Translation initiation factor IF-2</fullName>
    </recommendedName>
</protein>
<comment type="function">
    <text evidence="2">One of the essential components for the initiation of protein synthesis. Protects formylmethionyl-tRNA from spontaneous hydrolysis and promotes its binding to the 30S ribosomal subunits. Also involved in the hydrolysis of GTP during the formation of the 70S ribosomal complex.</text>
</comment>
<comment type="subcellular location">
    <subcellularLocation>
        <location evidence="2">Cytoplasm</location>
    </subcellularLocation>
</comment>
<comment type="similarity">
    <text evidence="2">Belongs to the TRAFAC class translation factor GTPase superfamily. Classic translation factor GTPase family. IF-2 subfamily.</text>
</comment>
<gene>
    <name evidence="2" type="primary">infB</name>
    <name type="ordered locus">KRH_16040</name>
</gene>
<organism>
    <name type="scientific">Kocuria rhizophila (strain ATCC 9341 / DSM 348 / NBRC 103217 / DC2201)</name>
    <dbReference type="NCBI Taxonomy" id="378753"/>
    <lineage>
        <taxon>Bacteria</taxon>
        <taxon>Bacillati</taxon>
        <taxon>Actinomycetota</taxon>
        <taxon>Actinomycetes</taxon>
        <taxon>Micrococcales</taxon>
        <taxon>Micrococcaceae</taxon>
        <taxon>Kocuria</taxon>
    </lineage>
</organism>
<evidence type="ECO:0000250" key="1"/>
<evidence type="ECO:0000255" key="2">
    <source>
        <dbReference type="HAMAP-Rule" id="MF_00100"/>
    </source>
</evidence>
<evidence type="ECO:0000256" key="3">
    <source>
        <dbReference type="SAM" id="MobiDB-lite"/>
    </source>
</evidence>
<feature type="chain" id="PRO_1000093795" description="Translation initiation factor IF-2">
    <location>
        <begin position="1"/>
        <end position="967"/>
    </location>
</feature>
<feature type="domain" description="tr-type G">
    <location>
        <begin position="460"/>
        <end position="632"/>
    </location>
</feature>
<feature type="region of interest" description="Disordered" evidence="3">
    <location>
        <begin position="34"/>
        <end position="363"/>
    </location>
</feature>
<feature type="region of interest" description="G1" evidence="1">
    <location>
        <begin position="469"/>
        <end position="476"/>
    </location>
</feature>
<feature type="region of interest" description="G2" evidence="1">
    <location>
        <begin position="494"/>
        <end position="498"/>
    </location>
</feature>
<feature type="region of interest" description="G3" evidence="1">
    <location>
        <begin position="519"/>
        <end position="522"/>
    </location>
</feature>
<feature type="region of interest" description="G4" evidence="1">
    <location>
        <begin position="573"/>
        <end position="576"/>
    </location>
</feature>
<feature type="region of interest" description="G5" evidence="1">
    <location>
        <begin position="609"/>
        <end position="611"/>
    </location>
</feature>
<feature type="compositionally biased region" description="Low complexity" evidence="3">
    <location>
        <begin position="51"/>
        <end position="96"/>
    </location>
</feature>
<feature type="compositionally biased region" description="Low complexity" evidence="3">
    <location>
        <begin position="103"/>
        <end position="154"/>
    </location>
</feature>
<feature type="compositionally biased region" description="Gly residues" evidence="3">
    <location>
        <begin position="184"/>
        <end position="196"/>
    </location>
</feature>
<feature type="compositionally biased region" description="Low complexity" evidence="3">
    <location>
        <begin position="197"/>
        <end position="206"/>
    </location>
</feature>
<feature type="compositionally biased region" description="Gly residues" evidence="3">
    <location>
        <begin position="300"/>
        <end position="333"/>
    </location>
</feature>
<feature type="compositionally biased region" description="Basic residues" evidence="3">
    <location>
        <begin position="334"/>
        <end position="345"/>
    </location>
</feature>
<feature type="binding site" evidence="2">
    <location>
        <begin position="469"/>
        <end position="476"/>
    </location>
    <ligand>
        <name>GTP</name>
        <dbReference type="ChEBI" id="CHEBI:37565"/>
    </ligand>
</feature>
<feature type="binding site" evidence="2">
    <location>
        <begin position="519"/>
        <end position="523"/>
    </location>
    <ligand>
        <name>GTP</name>
        <dbReference type="ChEBI" id="CHEBI:37565"/>
    </ligand>
</feature>
<feature type="binding site" evidence="2">
    <location>
        <begin position="573"/>
        <end position="576"/>
    </location>
    <ligand>
        <name>GTP</name>
        <dbReference type="ChEBI" id="CHEBI:37565"/>
    </ligand>
</feature>
<reference key="1">
    <citation type="journal article" date="2008" name="J. Bacteriol.">
        <title>Complete genome sequence of the soil actinomycete Kocuria rhizophila.</title>
        <authorList>
            <person name="Takarada H."/>
            <person name="Sekine M."/>
            <person name="Kosugi H."/>
            <person name="Matsuo Y."/>
            <person name="Fujisawa T."/>
            <person name="Omata S."/>
            <person name="Kishi E."/>
            <person name="Shimizu A."/>
            <person name="Tsukatani N."/>
            <person name="Tanikawa S."/>
            <person name="Fujita N."/>
            <person name="Harayama S."/>
        </authorList>
    </citation>
    <scope>NUCLEOTIDE SEQUENCE [LARGE SCALE GENOMIC DNA]</scope>
    <source>
        <strain>ATCC 9341 / DSM 348 / NBRC 103217 / DC2201</strain>
    </source>
</reference>
<sequence>MAKPRVHELAKELGITSKEAISKLQELGEFVRGASSTVEPPVAKKLRTAFPAGGDSAPAAKPAAKAPAQGVKKPAAAGPKPGAKAPAKPAASGNAARAEKPAASEAPKAAAASSEAPKSAAPQQGTAPAAASESSAPGTPASSAPRPGGATPGPRKSPAPGAKPGQSAPRPGNNPFASQQGMGRSEGGAQRGGPRPGGQQRSGKPGAPRPGNNPFAAQQGMRSANSGQGGPRPGGPRPGGPRPAQSGQGGPRPGAPRTGAPRQGQGGPRPGGPRPSPNMMPGQTTSVAPIGSRPAPGSGPRRGGGPGGGPGGGGGFRGRGGRGGTQGAFGRGGARGKHRKSKRAKRQELEQMSAPAVGGVSVPHGDGSTVVRLRRGASLMDFAEKINANPASLVTVLIHLGEMATQTQSLDEETFQLLGAELGYQIQVVSPEDEERELLESFDIDLDAELEAEGEDVLAPRPPVVTVMGHVDHGKTRLLDAIRNTKVIEGEAGGITQHIGAYQISTEVDGQERLITFIDTPGHEAFTAMRARGAQVTDIAVLVVAADDGVMPQTVEALNHAQAANVPIVVAVNKVDKPDANPDKIRGQLTEYGLVPEEYGGDTMFVDVSARENLNIDELLDAIVLTADGALELQATPDKNARGVAIEANLDKGRGAVCTVLVQSGTLKVGDSIVAGAAYGRVRAMFDEMGRTVEAATPSRPVQVLGLSTVPRAGDTFLATQEERTARQIAEKREAADRNAQLAKRRKRITLESFDEAVAEGKIDTLNLIIKGDVSGAVEALEDSLLKIDVGEEVQLRVIHRGVGAITQNDVNLATVDNAVIIGFNVRPAERVTELADREGVEMKFYSVIYNAIDEVESALKGMLKPEYEEVELGTAEIREVFRSSKWGNIAGAYVTKGLIRRNGKARLVRDGNVVQDNLSIDSLRRFKDDATEVREGYECGIGLGSFNDIHEGDIIETWEMREKPRD</sequence>